<sequence length="1483" mass="168491">MQRSPLEKASVLSKLFFSWTRPILIKGYRQRLELSDIYQVPSTDSADHLSEKLEREWDRELASKKNPKLINALRRCFFWRFAFYGILLYLGEVTKAVQPLLLGRIIASYDPDNKQERSIAIYLAIGLCLLFIMRPLLLHPAIFGLHHIGMQIRIAMFSLIYKKTLKLSSRVLDKISIGQLVSLLSNNLNKFDEGLALAHFVWIAPLQVTLLMGLLWDLLQASAFCGLAFLIVLALVQAGLGRMIMKYRDQRAGKINERLVITSEVIENIQSVKAYCWEEAMEKIIENIRQTELKLTRKAAHVRYFNSSAFFFSGFFVVSLSVLPYALIKTIILRKIFTTISFCIVLRMAVTRQFPWAVQTWYDSLGAINKIQDFLQKQEYKTLEYNLTTTEVMMENVTAFWEEGFGELLEKAKENSNDRKISNGDNSLFFSNFSLLGTPVLKDINFKIERGQLLAVAGSTGAGKTSLLMMIMGELEPSEGKIKHSGRISFCSQFSWIMPGTIKENIIFGVSYDEYRYRSVIKACQLEEDISKFAEKDNIVLGEGGVTLSGGQRARISLARAVYKDADLYLLDSPFGYLDVLTEKEIFESCVCKLMANKTRILVTSKMEHLKKADKVLILHEGSCYFYGTFSELQSLRPDFSSKLMGYDSFDQFSPERRNSIITETLRRFSLEGDAAVPWNETKKQSFKQTGEFGEKRKNSILNPINSIRKFSIVQKTPLPMNGIEGESEVPVERRLSLFPDCEQGEAILPRSNMINTGPTLRRQRRQSVLNLMTRSSVNQGQSIHRRTTASTRKMSLAPQANLTEMDIYSRRLSQDSGLEISEEINEEDLKECFFDDVESIPPVTTWNTYLRYITVHKNLIFVLIWCLVIFLAEVAVSLVVLWILRNLSSQDKGNSTQSVNSSYAVIFTSTSAYYIFYIYVGVADTLLALGLFRGLPLVHTLITVSKILHHKMLHSVLQAPMSTLNTLKAGGILNRFSKDIAILDDLLPLTIFDFIQLLLIVIGAVAVVSVLQPYIFLATVPVIAAFIILRAYFLHTSQQLKQLESEGRSPIFTHLLTSLKGLWTLRAFGRQPYFETLFHKALNLHTANWFLYLSTLRWFQMRMEIIFVIFFIAVTFISILTTGEGEGTVGIILTLAMNIMGTLQWAVNSSIEVDSLMRSVSRVFKFIDMPTEESKPPTKSFKPSKDAQLSKVTITENRHVREDDIWPSGGQMTVKDLTAKYIDGGNAILENISFSISPGQRVGLLGRTGSGKSTLLSALLRLVNTEGEIQIDGVSWDSIPLQEWRRAFGVIPQKVFIFSGTFRKNLDPYGQWNDQEIWKVADEVGLRSVIEQFPGKLDFVLVDGGYVLSHGHKQLMCLARSVLRKAKILLLDEPSAHLDPITYQIIRRTLKQAFADCTVILSEHRIEAMLECQRFLVIEDSRLRQFESIQRLLSERSAFRQAIGPPERPGLLPHRLSSRQRSPSRIAALKEETEDEVQDTRL</sequence>
<reference key="1">
    <citation type="submission" date="2004-10" db="EMBL/GenBank/DDBJ databases">
        <title>Cloning and functional analysis of dog cystic fibrosis transmembrane conductance regulator.</title>
        <authorList>
            <person name="Wang Y."/>
            <person name="Feng X."/>
            <person name="Xu L."/>
            <person name="Yang H."/>
            <person name="Ma T."/>
        </authorList>
    </citation>
    <scope>NUCLEOTIDE SEQUENCE [MRNA]</scope>
    <source>
        <tissue>Pancreas</tissue>
    </source>
</reference>
<reference key="2">
    <citation type="journal article" date="2003" name="Nature">
        <title>Comparative analyses of multi-species sequences from targeted genomic regions.</title>
        <authorList>
            <person name="Thomas J.W."/>
            <person name="Touchman J.W."/>
            <person name="Blakesley R.W."/>
            <person name="Bouffard G.G."/>
            <person name="Beckstrom-Sternberg S.M."/>
            <person name="Margulies E.H."/>
            <person name="Blanchette M."/>
            <person name="Siepel A.C."/>
            <person name="Thomas P.J."/>
            <person name="McDowell J.C."/>
            <person name="Maskeri B."/>
            <person name="Hansen N.F."/>
            <person name="Schwartz M.S."/>
            <person name="Weber R.J."/>
            <person name="Kent W.J."/>
            <person name="Karolchik D."/>
            <person name="Bruen T.C."/>
            <person name="Bevan R."/>
            <person name="Cutler D.J."/>
            <person name="Schwartz S."/>
            <person name="Elnitski L."/>
            <person name="Idol J.R."/>
            <person name="Prasad A.B."/>
            <person name="Lee-Lin S.-Q."/>
            <person name="Maduro V.V.B."/>
            <person name="Summers T.J."/>
            <person name="Portnoy M.E."/>
            <person name="Dietrich N.L."/>
            <person name="Akhter N."/>
            <person name="Ayele K."/>
            <person name="Benjamin B."/>
            <person name="Cariaga K."/>
            <person name="Brinkley C.P."/>
            <person name="Brooks S.Y."/>
            <person name="Granite S."/>
            <person name="Guan X."/>
            <person name="Gupta J."/>
            <person name="Haghighi P."/>
            <person name="Ho S.-L."/>
            <person name="Huang M.C."/>
            <person name="Karlins E."/>
            <person name="Laric P.L."/>
            <person name="Legaspi R."/>
            <person name="Lim M.J."/>
            <person name="Maduro Q.L."/>
            <person name="Masiello C.A."/>
            <person name="Mastrian S.D."/>
            <person name="McCloskey J.C."/>
            <person name="Pearson R."/>
            <person name="Stantripop S."/>
            <person name="Tiongson E.E."/>
            <person name="Tran J.T."/>
            <person name="Tsurgeon C."/>
            <person name="Vogt J.L."/>
            <person name="Walker M.A."/>
            <person name="Wetherby K.D."/>
            <person name="Wiggins L.S."/>
            <person name="Young A.C."/>
            <person name="Zhang L.-H."/>
            <person name="Osoegawa K."/>
            <person name="Zhu B."/>
            <person name="Zhao B."/>
            <person name="Shu C.L."/>
            <person name="De Jong P.J."/>
            <person name="Lawrence C.E."/>
            <person name="Smit A.F."/>
            <person name="Chakravarti A."/>
            <person name="Haussler D."/>
            <person name="Green P."/>
            <person name="Miller W."/>
            <person name="Green E.D."/>
        </authorList>
    </citation>
    <scope>NUCLEOTIDE SEQUENCE [LARGE SCALE GENOMIC DNA]</scope>
</reference>
<evidence type="ECO:0000250" key="1">
    <source>
        <dbReference type="UniProtKB" id="P13569"/>
    </source>
</evidence>
<evidence type="ECO:0000250" key="2">
    <source>
        <dbReference type="UniProtKB" id="P26361"/>
    </source>
</evidence>
<evidence type="ECO:0000250" key="3">
    <source>
        <dbReference type="UniProtKB" id="P34158"/>
    </source>
</evidence>
<evidence type="ECO:0000255" key="4"/>
<evidence type="ECO:0000255" key="5">
    <source>
        <dbReference type="PROSITE-ProRule" id="PRU00434"/>
    </source>
</evidence>
<evidence type="ECO:0000255" key="6">
    <source>
        <dbReference type="PROSITE-ProRule" id="PRU00441"/>
    </source>
</evidence>
<evidence type="ECO:0000256" key="7">
    <source>
        <dbReference type="SAM" id="MobiDB-lite"/>
    </source>
</evidence>
<evidence type="ECO:0000305" key="8"/>
<proteinExistence type="evidence at transcript level"/>
<gene>
    <name evidence="1" type="primary">CFTR</name>
    <name type="synonym">ABCC7</name>
</gene>
<name>CFTR_CANLF</name>
<feature type="chain" id="PRO_0000093417" description="Cystic fibrosis transmembrane conductance regulator">
    <location>
        <begin position="1"/>
        <end position="1483"/>
    </location>
</feature>
<feature type="topological domain" description="Cytoplasmic" evidence="1">
    <location>
        <begin position="1"/>
        <end position="77"/>
    </location>
</feature>
<feature type="transmembrane region" description="Helical; Name=1" evidence="1">
    <location>
        <begin position="78"/>
        <end position="98"/>
    </location>
</feature>
<feature type="topological domain" description="Extracellular" evidence="1">
    <location>
        <begin position="99"/>
        <end position="122"/>
    </location>
</feature>
<feature type="transmembrane region" description="Helical; Name=2" evidence="1">
    <location>
        <begin position="123"/>
        <end position="146"/>
    </location>
</feature>
<feature type="topological domain" description="Cytoplasmic" evidence="1">
    <location>
        <begin position="147"/>
        <end position="195"/>
    </location>
</feature>
<feature type="transmembrane region" description="Helical; Name=3" evidence="1">
    <location>
        <begin position="196"/>
        <end position="216"/>
    </location>
</feature>
<feature type="topological domain" description="Extracellular" evidence="1">
    <location>
        <begin position="217"/>
        <end position="222"/>
    </location>
</feature>
<feature type="transmembrane region" description="Helical; Name=4" evidence="1">
    <location>
        <begin position="223"/>
        <end position="243"/>
    </location>
</feature>
<feature type="topological domain" description="Cytoplasmic" evidence="1">
    <location>
        <begin position="244"/>
        <end position="298"/>
    </location>
</feature>
<feature type="transmembrane region" description="Helical; Name=5" evidence="1">
    <location>
        <begin position="299"/>
        <end position="319"/>
    </location>
</feature>
<feature type="topological domain" description="Extracellular" evidence="1">
    <location>
        <begin position="320"/>
        <end position="339"/>
    </location>
</feature>
<feature type="transmembrane region" description="Helical; Name=6" evidence="1">
    <location>
        <begin position="340"/>
        <end position="358"/>
    </location>
</feature>
<feature type="topological domain" description="Cytoplasmic" evidence="1">
    <location>
        <begin position="359"/>
        <end position="859"/>
    </location>
</feature>
<feature type="transmembrane region" description="Helical; Name=7" evidence="1">
    <location>
        <begin position="860"/>
        <end position="880"/>
    </location>
</feature>
<feature type="topological domain" description="Extracellular" evidence="1">
    <location>
        <begin position="881"/>
        <end position="919"/>
    </location>
</feature>
<feature type="transmembrane region" description="Discontinuously helical; Name=8" evidence="1">
    <location>
        <begin position="920"/>
        <end position="940"/>
    </location>
</feature>
<feature type="topological domain" description="Cytoplasmic" evidence="1">
    <location>
        <begin position="941"/>
        <end position="991"/>
    </location>
</feature>
<feature type="transmembrane region" description="Helical; Name=9" evidence="1">
    <location>
        <begin position="992"/>
        <end position="1012"/>
    </location>
</feature>
<feature type="topological domain" description="Extracellular" evidence="1">
    <location>
        <begin position="1013"/>
        <end position="1014"/>
    </location>
</feature>
<feature type="transmembrane region" description="Helical; Name=10" evidence="1">
    <location>
        <begin position="1015"/>
        <end position="1035"/>
    </location>
</feature>
<feature type="topological domain" description="Cytoplasmic" evidence="1">
    <location>
        <begin position="1036"/>
        <end position="1096"/>
    </location>
</feature>
<feature type="transmembrane region" description="Helical; Name=11" evidence="1">
    <location>
        <begin position="1097"/>
        <end position="1117"/>
    </location>
</feature>
<feature type="topological domain" description="Extracellular" evidence="1">
    <location>
        <begin position="1118"/>
        <end position="1131"/>
    </location>
</feature>
<feature type="transmembrane region" description="Helical; Name=12" evidence="1">
    <location>
        <begin position="1132"/>
        <end position="1152"/>
    </location>
</feature>
<feature type="topological domain" description="Cytoplasmic" evidence="1">
    <location>
        <begin position="1153"/>
        <end position="1483"/>
    </location>
</feature>
<feature type="domain" description="ABC transmembrane type-1 1" evidence="6">
    <location>
        <begin position="81"/>
        <end position="365"/>
    </location>
</feature>
<feature type="domain" description="ABC transporter 1" evidence="5">
    <location>
        <begin position="423"/>
        <end position="646"/>
    </location>
</feature>
<feature type="domain" description="ABC transmembrane type-1 2" evidence="6">
    <location>
        <begin position="860"/>
        <end position="1156"/>
    </location>
</feature>
<feature type="domain" description="ABC transporter 2" evidence="5">
    <location>
        <begin position="1213"/>
        <end position="1446"/>
    </location>
</feature>
<feature type="region of interest" description="Disordered R region" evidence="1">
    <location>
        <begin position="654"/>
        <end position="832"/>
    </location>
</feature>
<feature type="region of interest" description="Interaction with GORASP2" evidence="1">
    <location>
        <begin position="1389"/>
        <end position="1483"/>
    </location>
</feature>
<feature type="region of interest" description="Disordered" evidence="7">
    <location>
        <begin position="1444"/>
        <end position="1483"/>
    </location>
</feature>
<feature type="short sequence motif" description="PDZ-binding" evidence="1">
    <location>
        <begin position="1481"/>
        <end position="1483"/>
    </location>
</feature>
<feature type="compositionally biased region" description="Acidic residues" evidence="7">
    <location>
        <begin position="1473"/>
        <end position="1483"/>
    </location>
</feature>
<feature type="binding site" evidence="1">
    <location>
        <position position="401"/>
    </location>
    <ligand>
        <name>ATP</name>
        <dbReference type="ChEBI" id="CHEBI:30616"/>
        <label>1</label>
    </ligand>
</feature>
<feature type="binding site" evidence="1">
    <location>
        <position position="434"/>
    </location>
    <ligand>
        <name>ATP</name>
        <dbReference type="ChEBI" id="CHEBI:30616"/>
        <label>1</label>
    </ligand>
</feature>
<feature type="binding site" evidence="5">
    <location>
        <begin position="458"/>
        <end position="465"/>
    </location>
    <ligand>
        <name>ATP</name>
        <dbReference type="ChEBI" id="CHEBI:30616"/>
        <label>1</label>
    </ligand>
</feature>
<feature type="binding site" evidence="2">
    <location>
        <position position="493"/>
    </location>
    <ligand>
        <name>ATP</name>
        <dbReference type="ChEBI" id="CHEBI:30616"/>
        <label>1</label>
    </ligand>
</feature>
<feature type="binding site" evidence="1">
    <location>
        <position position="1222"/>
    </location>
    <ligand>
        <name>ATP</name>
        <dbReference type="ChEBI" id="CHEBI:30616"/>
        <label>2</label>
    </ligand>
</feature>
<feature type="binding site" evidence="5">
    <location>
        <begin position="1247"/>
        <end position="1254"/>
    </location>
    <ligand>
        <name>ATP</name>
        <dbReference type="ChEBI" id="CHEBI:30616"/>
        <label>2</label>
    </ligand>
</feature>
<feature type="modified residue" description="Phosphoserine" evidence="1">
    <location>
        <position position="549"/>
    </location>
</feature>
<feature type="modified residue" description="Phosphoserine" evidence="1">
    <location>
        <position position="660"/>
    </location>
</feature>
<feature type="modified residue" description="Phosphoserine; by PKA" evidence="1">
    <location>
        <position position="670"/>
    </location>
</feature>
<feature type="modified residue" description="Phosphoserine" evidence="1">
    <location>
        <position position="686"/>
    </location>
</feature>
<feature type="modified residue" description="Phosphoserine" evidence="1">
    <location>
        <position position="700"/>
    </location>
</feature>
<feature type="modified residue" description="Phosphoserine" evidence="1">
    <location>
        <position position="712"/>
    </location>
</feature>
<feature type="modified residue" description="Phosphothreonine" evidence="1">
    <location>
        <position position="717"/>
    </location>
</feature>
<feature type="modified residue" description="Phosphoserine" evidence="1">
    <location>
        <position position="737"/>
    </location>
</feature>
<feature type="modified residue" description="Phosphoserine" evidence="1">
    <location>
        <position position="768"/>
    </location>
</feature>
<feature type="modified residue" description="Phosphoserine" evidence="1">
    <location>
        <position position="791"/>
    </location>
</feature>
<feature type="modified residue" description="Phosphoserine" evidence="1">
    <location>
        <position position="796"/>
    </location>
</feature>
<feature type="modified residue" description="Phosphoserine" evidence="1">
    <location>
        <position position="814"/>
    </location>
</feature>
<feature type="modified residue" description="Phosphoserine" evidence="1">
    <location>
        <position position="1459"/>
    </location>
</feature>
<feature type="lipid moiety-binding region" description="S-palmitoyl cysteine" evidence="1">
    <location>
        <position position="524"/>
    </location>
</feature>
<feature type="lipid moiety-binding region" description="S-palmitoyl cysteine" evidence="1">
    <location>
        <position position="1398"/>
    </location>
</feature>
<feature type="glycosylation site" description="N-linked (GlcNAc...) asparagine" evidence="4">
    <location>
        <position position="887"/>
    </location>
</feature>
<feature type="glycosylation site" description="N-linked (GlcNAc...) asparagine" evidence="4">
    <location>
        <position position="895"/>
    </location>
</feature>
<feature type="glycosylation site" description="N-linked (GlcNAc...) asparagine" evidence="4">
    <location>
        <position position="901"/>
    </location>
</feature>
<feature type="cross-link" description="Glycyl lysine isopeptide (Lys-Gly) (interchain with G-Cter in ubiquitin)" evidence="1">
    <location>
        <position position="688"/>
    </location>
</feature>
<feature type="sequence conflict" description="In Ref. 1; AAV40962." evidence="8" ref="1">
    <original>V</original>
    <variation>A</variation>
    <location>
        <position position="945"/>
    </location>
</feature>
<feature type="sequence conflict" description="In Ref. 1; AAV40962." evidence="8" ref="1">
    <original>S</original>
    <variation>P</variation>
    <location>
        <position position="978"/>
    </location>
</feature>
<feature type="sequence conflict" description="In Ref. 1; AAV40962." evidence="8" ref="1">
    <original>S</original>
    <variation>P</variation>
    <location>
        <position position="1150"/>
    </location>
</feature>
<comment type="function">
    <text evidence="1 2">Epithelial ion channel that plays an important role in the regulation of epithelial ion and water transport and fluid homeostasis. Mediates the transport of chloride ions across the cell membrane (By similarity). Possesses an intrinsic ATPase activity and utilizes ATP to gate its channel; the passive flow of anions through the channel is gated by cycles of ATP binding and hydrolysis by the ATP-binding domains (By similarity). The ion channel is also permeable to HCO(3)(-); selectivity depends on the extracellular chloride concentration. Exerts its function also by modulating the activity of other ion channels and transporters. Contributes to the regulation of the pH and the ion content of the epithelial fluid layer. Modulates the activity of the epithelial sodium channel (ENaC) complex, in part by regulating the cell surface expression of the ENaC complex. May regulate bicarbonate secretion and salvage in epithelial cells by regulating the transporter SLC4A7. Can inhibit the chloride channel activity of ANO1 (By similarity). Plays a role in the chloride and bicarbonate homeostasis during sperm epididymal maturation and capacitation (By similarity).</text>
</comment>
<comment type="catalytic activity">
    <reaction evidence="1">
        <text>ATP + H2O + closed Cl(-) channel = ADP + phosphate + open Cl(-) channel.</text>
        <dbReference type="EC" id="5.6.1.6"/>
    </reaction>
</comment>
<comment type="catalytic activity">
    <reaction evidence="1">
        <text>chloride(in) = chloride(out)</text>
        <dbReference type="Rhea" id="RHEA:29823"/>
        <dbReference type="ChEBI" id="CHEBI:17996"/>
    </reaction>
</comment>
<comment type="catalytic activity">
    <reaction evidence="1">
        <text>hydrogencarbonate(in) = hydrogencarbonate(out)</text>
        <dbReference type="Rhea" id="RHEA:28695"/>
        <dbReference type="ChEBI" id="CHEBI:17544"/>
    </reaction>
</comment>
<comment type="catalytic activity">
    <reaction evidence="1">
        <text>ATP + H2O = ADP + phosphate + H(+)</text>
        <dbReference type="Rhea" id="RHEA:13065"/>
        <dbReference type="ChEBI" id="CHEBI:15377"/>
        <dbReference type="ChEBI" id="CHEBI:15378"/>
        <dbReference type="ChEBI" id="CHEBI:30616"/>
        <dbReference type="ChEBI" id="CHEBI:43474"/>
        <dbReference type="ChEBI" id="CHEBI:456216"/>
    </reaction>
    <physiologicalReaction direction="left-to-right" evidence="1">
        <dbReference type="Rhea" id="RHEA:13066"/>
    </physiologicalReaction>
</comment>
<comment type="subunit">
    <text evidence="1 2 3">Monomer; does not require oligomerization for channel activity. May form oligomers in the membrane (By similarity). Interacts with SLC26A3, SLC26A6 and NHERF1 (By similarity). Interacts with SHANK2 (By similarity). Interacts with MYO6 (By similarity). Interacts (via C-terminus) with GOPC (via PDZ domain); this promotes CFTR internalization and thereby decreases channel activity. Interacts with SLC4A7 through NHERF1. Found in a complex with MYO5B and RAB11A. Interacts with ANO1. Interacts with SLC26A8 (By similarity). Interacts with AHCYL1; the interaction increases CFTR activity (By similarity). Interacts with CSE1L (By similarity). The core-glycosylated form interacts with GORASP2 (via PDZ GRASP-type 1 domain) in respone to ER stress (By similarity). Interacts with MARCHF2; the interaction leads to CFTR ubiqtuitination and degradation (By similarity). Interacts with ADGRG2 (By similarity).</text>
</comment>
<comment type="subcellular location">
    <subcellularLocation>
        <location evidence="2">Apical cell membrane</location>
        <topology evidence="1">Multi-pass membrane protein</topology>
    </subcellularLocation>
    <subcellularLocation>
        <location evidence="1">Early endosome membrane</location>
        <topology evidence="1">Multi-pass membrane protein</topology>
    </subcellularLocation>
    <subcellularLocation>
        <location evidence="2">Cell membrane</location>
        <topology evidence="1">Multi-pass membrane protein</topology>
    </subcellularLocation>
    <subcellularLocation>
        <location evidence="1">Recycling endosome membrane</location>
        <topology evidence="1">Multi-pass membrane protein</topology>
    </subcellularLocation>
    <subcellularLocation>
        <location evidence="1">Endoplasmic reticulum membrane</location>
        <topology evidence="1">Multi-pass membrane protein</topology>
    </subcellularLocation>
    <subcellularLocation>
        <location evidence="3">Nucleus</location>
    </subcellularLocation>
    <text evidence="1 3">The channel is internalized from the cell surface into an endosomal recycling compartment, from where it is recycled to the cell membrane. In the oviduct and bronchus, detected on the apical side of epithelial cells, but not associated with cilia. In Sertoli cells, a processed product is detected in the nucleus. ER stress induces GORASP2-mediated unconventional (ER/Golgi-independent) trafficking of core-glycosylated CFTR to cell membrane.</text>
</comment>
<comment type="domain">
    <text evidence="1 2">Binds and hydrolyzes ATP via the two cytoplasmic ABC transporter nucleotide-binding domains. The two ATP-binding domains interact with each other, forming a head-to-tail dimer. Normal ATPase activity requires interaction between the two domains. The first ABC transporter nucleotide-binding domain has no ATPase activity by itself.</text>
</comment>
<comment type="domain">
    <text evidence="1">The PDZ-binding motif mediates interactions with GOPC and with the SLC4A7, NHERF1/EBP50 complex.</text>
</comment>
<comment type="domain">
    <text evidence="1">The disordered R region mediates channel activation when it is phosphorylated, but not in the absence of phosphorylation.</text>
</comment>
<comment type="PTM">
    <text evidence="1">N-glycosylated.</text>
</comment>
<comment type="PTM">
    <text evidence="1">Phosphorylated; cAMP treatment promotes phosphorylation and activates the channel. Dephosphorylation decreases the ATPase activity (in vitro). Phosphorylation at PKA sites activates the channel. Phosphorylation at PKC sites enhances the response to phosphorylation by PKA. Phosphorylated by AMPK; this inhibits channel activity.</text>
</comment>
<comment type="PTM">
    <text evidence="1">Ubiquitinated, leading to its degradation in the lysosome. Deubiquitination by USP10 in early endosomes enhances its endocytic recycling to the cell membrane. Ubiquitinated by RNF185 during ER stress. Ubiquitinated by MARCHF2 (By similarity).</text>
</comment>
<comment type="similarity">
    <text evidence="8">Belongs to the ABC transporter superfamily. ABCC family. CFTR transporter (TC 3.A.1.202) subfamily.</text>
</comment>
<protein>
    <recommendedName>
        <fullName evidence="1">Cystic fibrosis transmembrane conductance regulator</fullName>
        <shortName>CFTR</shortName>
    </recommendedName>
    <alternativeName>
        <fullName>ATP-binding cassette sub-family C member 7</fullName>
    </alternativeName>
    <alternativeName>
        <fullName>Channel conductance-controlling ATPase</fullName>
        <ecNumber evidence="1">5.6.1.6</ecNumber>
    </alternativeName>
    <alternativeName>
        <fullName>cAMP-dependent chloride channel</fullName>
    </alternativeName>
</protein>
<accession>Q5U820</accession>
<accession>A0M8V3</accession>
<keyword id="KW-0067">ATP-binding</keyword>
<keyword id="KW-1003">Cell membrane</keyword>
<keyword id="KW-0868">Chloride</keyword>
<keyword id="KW-0869">Chloride channel</keyword>
<keyword id="KW-0256">Endoplasmic reticulum</keyword>
<keyword id="KW-0967">Endosome</keyword>
<keyword id="KW-0325">Glycoprotein</keyword>
<keyword id="KW-0407">Ion channel</keyword>
<keyword id="KW-0406">Ion transport</keyword>
<keyword id="KW-0413">Isomerase</keyword>
<keyword id="KW-1017">Isopeptide bond</keyword>
<keyword id="KW-0449">Lipoprotein</keyword>
<keyword id="KW-0472">Membrane</keyword>
<keyword id="KW-0547">Nucleotide-binding</keyword>
<keyword id="KW-0539">Nucleus</keyword>
<keyword id="KW-0564">Palmitate</keyword>
<keyword id="KW-0597">Phosphoprotein</keyword>
<keyword id="KW-1185">Reference proteome</keyword>
<keyword id="KW-0677">Repeat</keyword>
<keyword id="KW-0812">Transmembrane</keyword>
<keyword id="KW-1133">Transmembrane helix</keyword>
<keyword id="KW-0813">Transport</keyword>
<keyword id="KW-0832">Ubl conjugation</keyword>
<organism>
    <name type="scientific">Canis lupus familiaris</name>
    <name type="common">Dog</name>
    <name type="synonym">Canis familiaris</name>
    <dbReference type="NCBI Taxonomy" id="9615"/>
    <lineage>
        <taxon>Eukaryota</taxon>
        <taxon>Metazoa</taxon>
        <taxon>Chordata</taxon>
        <taxon>Craniata</taxon>
        <taxon>Vertebrata</taxon>
        <taxon>Euteleostomi</taxon>
        <taxon>Mammalia</taxon>
        <taxon>Eutheria</taxon>
        <taxon>Laurasiatheria</taxon>
        <taxon>Carnivora</taxon>
        <taxon>Caniformia</taxon>
        <taxon>Canidae</taxon>
        <taxon>Canis</taxon>
    </lineage>
</organism>
<dbReference type="EC" id="5.6.1.6" evidence="1"/>
<dbReference type="EMBL" id="AY780429">
    <property type="protein sequence ID" value="AAV40962.1"/>
    <property type="molecule type" value="mRNA"/>
</dbReference>
<dbReference type="EMBL" id="DP000236">
    <property type="protein sequence ID" value="AAR16271.1"/>
    <property type="molecule type" value="Genomic_DNA"/>
</dbReference>
<dbReference type="RefSeq" id="NP_001007144.1">
    <property type="nucleotide sequence ID" value="NM_001007143.1"/>
</dbReference>
<dbReference type="SMR" id="Q5U820"/>
<dbReference type="FunCoup" id="Q5U820">
    <property type="interactions" value="103"/>
</dbReference>
<dbReference type="STRING" id="9615.ENSCAFP00000005112"/>
<dbReference type="GlyCosmos" id="Q5U820">
    <property type="glycosylation" value="3 sites, No reported glycans"/>
</dbReference>
<dbReference type="PaxDb" id="9612-ENSCAFP00000005112"/>
<dbReference type="Ensembl" id="ENSCAFT00000005518.5">
    <property type="protein sequence ID" value="ENSCAFP00000005112.3"/>
    <property type="gene ID" value="ENSCAFG00000003429.5"/>
</dbReference>
<dbReference type="Ensembl" id="ENSCAFT00030024246.1">
    <property type="protein sequence ID" value="ENSCAFP00030021148.1"/>
    <property type="gene ID" value="ENSCAFG00030012224.1"/>
</dbReference>
<dbReference type="GeneID" id="492302"/>
<dbReference type="KEGG" id="cfa:492302"/>
<dbReference type="CTD" id="1080"/>
<dbReference type="VGNC" id="VGNC:39180">
    <property type="gene designation" value="CFTR"/>
</dbReference>
<dbReference type="eggNOG" id="KOG0054">
    <property type="taxonomic scope" value="Eukaryota"/>
</dbReference>
<dbReference type="HOGENOM" id="CLU_000604_27_1_1"/>
<dbReference type="InParanoid" id="Q5U820"/>
<dbReference type="OMA" id="CQRYLVI"/>
<dbReference type="OrthoDB" id="6500128at2759"/>
<dbReference type="TreeFam" id="TF105200"/>
<dbReference type="Reactome" id="R-CFA-382556">
    <property type="pathway name" value="ABC-family proteins mediated transport"/>
</dbReference>
<dbReference type="Reactome" id="R-CFA-5627083">
    <property type="pathway name" value="RHO GTPases regulate CFTR trafficking"/>
</dbReference>
<dbReference type="Reactome" id="R-CFA-5689880">
    <property type="pathway name" value="Ub-specific processing proteases"/>
</dbReference>
<dbReference type="Reactome" id="R-CFA-8856825">
    <property type="pathway name" value="Cargo recognition for clathrin-mediated endocytosis"/>
</dbReference>
<dbReference type="Reactome" id="R-CFA-8856828">
    <property type="pathway name" value="Clathrin-mediated endocytosis"/>
</dbReference>
<dbReference type="Reactome" id="R-CFA-9013406">
    <property type="pathway name" value="RHOQ GTPase cycle"/>
</dbReference>
<dbReference type="Reactome" id="R-CFA-9646399">
    <property type="pathway name" value="Aggrephagy"/>
</dbReference>
<dbReference type="Proteomes" id="UP000002254">
    <property type="component" value="Chromosome 14"/>
</dbReference>
<dbReference type="Proteomes" id="UP000694429">
    <property type="component" value="Chromosome 14"/>
</dbReference>
<dbReference type="Proteomes" id="UP000694542">
    <property type="component" value="Unplaced"/>
</dbReference>
<dbReference type="Proteomes" id="UP000805418">
    <property type="component" value="Unplaced"/>
</dbReference>
<dbReference type="Bgee" id="ENSCAFG00000003429">
    <property type="expression patterns" value="Expressed in pancreas and 15 other cell types or tissues"/>
</dbReference>
<dbReference type="GO" id="GO:0016324">
    <property type="term" value="C:apical plasma membrane"/>
    <property type="evidence" value="ECO:0000250"/>
    <property type="project" value="UniProtKB"/>
</dbReference>
<dbReference type="GO" id="GO:0034707">
    <property type="term" value="C:chloride channel complex"/>
    <property type="evidence" value="ECO:0007669"/>
    <property type="project" value="UniProtKB-KW"/>
</dbReference>
<dbReference type="GO" id="GO:0005829">
    <property type="term" value="C:cytosol"/>
    <property type="evidence" value="ECO:0000318"/>
    <property type="project" value="GO_Central"/>
</dbReference>
<dbReference type="GO" id="GO:0005769">
    <property type="term" value="C:early endosome"/>
    <property type="evidence" value="ECO:0000250"/>
    <property type="project" value="UniProtKB"/>
</dbReference>
<dbReference type="GO" id="GO:0031901">
    <property type="term" value="C:early endosome membrane"/>
    <property type="evidence" value="ECO:0007669"/>
    <property type="project" value="UniProtKB-SubCell"/>
</dbReference>
<dbReference type="GO" id="GO:0005789">
    <property type="term" value="C:endoplasmic reticulum membrane"/>
    <property type="evidence" value="ECO:0000250"/>
    <property type="project" value="UniProtKB"/>
</dbReference>
<dbReference type="GO" id="GO:0016020">
    <property type="term" value="C:membrane"/>
    <property type="evidence" value="ECO:0000250"/>
    <property type="project" value="UniProtKB"/>
</dbReference>
<dbReference type="GO" id="GO:0005634">
    <property type="term" value="C:nucleus"/>
    <property type="evidence" value="ECO:0000250"/>
    <property type="project" value="UniProtKB"/>
</dbReference>
<dbReference type="GO" id="GO:0005886">
    <property type="term" value="C:plasma membrane"/>
    <property type="evidence" value="ECO:0000250"/>
    <property type="project" value="UniProtKB"/>
</dbReference>
<dbReference type="GO" id="GO:0055038">
    <property type="term" value="C:recycling endosome membrane"/>
    <property type="evidence" value="ECO:0007669"/>
    <property type="project" value="UniProtKB-SubCell"/>
</dbReference>
<dbReference type="GO" id="GO:0140359">
    <property type="term" value="F:ABC-type transporter activity"/>
    <property type="evidence" value="ECO:0007669"/>
    <property type="project" value="InterPro"/>
</dbReference>
<dbReference type="GO" id="GO:0005524">
    <property type="term" value="F:ATP binding"/>
    <property type="evidence" value="ECO:0007669"/>
    <property type="project" value="UniProtKB-KW"/>
</dbReference>
<dbReference type="GO" id="GO:0016887">
    <property type="term" value="F:ATP hydrolysis activity"/>
    <property type="evidence" value="ECO:0000250"/>
    <property type="project" value="UniProtKB"/>
</dbReference>
<dbReference type="GO" id="GO:0042626">
    <property type="term" value="F:ATPase-coupled transmembrane transporter activity"/>
    <property type="evidence" value="ECO:0000318"/>
    <property type="project" value="GO_Central"/>
</dbReference>
<dbReference type="GO" id="GO:0015106">
    <property type="term" value="F:bicarbonate transmembrane transporter activity"/>
    <property type="evidence" value="ECO:0000250"/>
    <property type="project" value="UniProtKB"/>
</dbReference>
<dbReference type="GO" id="GO:0005254">
    <property type="term" value="F:chloride channel activity"/>
    <property type="evidence" value="ECO:0000250"/>
    <property type="project" value="UniProtKB"/>
</dbReference>
<dbReference type="GO" id="GO:0019869">
    <property type="term" value="F:chloride channel inhibitor activity"/>
    <property type="evidence" value="ECO:0000250"/>
    <property type="project" value="UniProtKB"/>
</dbReference>
<dbReference type="GO" id="GO:0015108">
    <property type="term" value="F:chloride transmembrane transporter activity"/>
    <property type="evidence" value="ECO:0000250"/>
    <property type="project" value="UniProtKB"/>
</dbReference>
<dbReference type="GO" id="GO:0005260">
    <property type="term" value="F:intracellularly ATP-gated chloride channel activity"/>
    <property type="evidence" value="ECO:0000250"/>
    <property type="project" value="UniProtKB"/>
</dbReference>
<dbReference type="GO" id="GO:0015701">
    <property type="term" value="P:bicarbonate transport"/>
    <property type="evidence" value="ECO:0000250"/>
    <property type="project" value="UniProtKB"/>
</dbReference>
<dbReference type="GO" id="GO:0071320">
    <property type="term" value="P:cellular response to cAMP"/>
    <property type="evidence" value="ECO:0000250"/>
    <property type="project" value="UniProtKB"/>
</dbReference>
<dbReference type="GO" id="GO:1904322">
    <property type="term" value="P:cellular response to forskolin"/>
    <property type="evidence" value="ECO:0000250"/>
    <property type="project" value="UniProtKB"/>
</dbReference>
<dbReference type="GO" id="GO:1902476">
    <property type="term" value="P:chloride transmembrane transport"/>
    <property type="evidence" value="ECO:0000250"/>
    <property type="project" value="UniProtKB"/>
</dbReference>
<dbReference type="GO" id="GO:0051454">
    <property type="term" value="P:intracellular pH elevation"/>
    <property type="evidence" value="ECO:0000250"/>
    <property type="project" value="UniProtKB"/>
</dbReference>
<dbReference type="GO" id="GO:0060081">
    <property type="term" value="P:membrane hyperpolarization"/>
    <property type="evidence" value="ECO:0000250"/>
    <property type="project" value="UniProtKB"/>
</dbReference>
<dbReference type="GO" id="GO:0050891">
    <property type="term" value="P:multicellular organismal-level water homeostasis"/>
    <property type="evidence" value="ECO:0000250"/>
    <property type="project" value="UniProtKB"/>
</dbReference>
<dbReference type="GO" id="GO:0034976">
    <property type="term" value="P:response to endoplasmic reticulum stress"/>
    <property type="evidence" value="ECO:0000250"/>
    <property type="project" value="UniProtKB"/>
</dbReference>
<dbReference type="GO" id="GO:0048240">
    <property type="term" value="P:sperm capacitation"/>
    <property type="evidence" value="ECO:0000250"/>
    <property type="project" value="UniProtKB"/>
</dbReference>
<dbReference type="GO" id="GO:0035377">
    <property type="term" value="P:transepithelial water transport"/>
    <property type="evidence" value="ECO:0000250"/>
    <property type="project" value="UniProtKB"/>
</dbReference>
<dbReference type="CDD" id="cd18594">
    <property type="entry name" value="ABC_6TM_CFTR_D1"/>
    <property type="match status" value="1"/>
</dbReference>
<dbReference type="CDD" id="cd18600">
    <property type="entry name" value="ABC_6TM_CFTR_D2"/>
    <property type="match status" value="1"/>
</dbReference>
<dbReference type="CDD" id="cd03291">
    <property type="entry name" value="ABCC_CFTR1"/>
    <property type="match status" value="1"/>
</dbReference>
<dbReference type="CDD" id="cd03289">
    <property type="entry name" value="ABCC_CFTR2"/>
    <property type="match status" value="1"/>
</dbReference>
<dbReference type="FunFam" id="1.20.1560.10:FF:000017">
    <property type="entry name" value="Cystic fibrosis transmembrane conductance regulator"/>
    <property type="match status" value="1"/>
</dbReference>
<dbReference type="FunFam" id="1.20.1560.10:FF:000019">
    <property type="entry name" value="Cystic fibrosis transmembrane conductance regulator"/>
    <property type="match status" value="1"/>
</dbReference>
<dbReference type="FunFam" id="3.40.50.300:FF:000581">
    <property type="entry name" value="Cystic fibrosis transmembrane conductance regulator"/>
    <property type="match status" value="1"/>
</dbReference>
<dbReference type="FunFam" id="3.40.50.300:FF:000591">
    <property type="entry name" value="Cystic fibrosis transmembrane conductance regulator"/>
    <property type="match status" value="1"/>
</dbReference>
<dbReference type="Gene3D" id="1.20.1560.10">
    <property type="entry name" value="ABC transporter type 1, transmembrane domain"/>
    <property type="match status" value="2"/>
</dbReference>
<dbReference type="Gene3D" id="3.40.50.300">
    <property type="entry name" value="P-loop containing nucleotide triphosphate hydrolases"/>
    <property type="match status" value="2"/>
</dbReference>
<dbReference type="InterPro" id="IPR003593">
    <property type="entry name" value="AAA+_ATPase"/>
</dbReference>
<dbReference type="InterPro" id="IPR011527">
    <property type="entry name" value="ABC1_TM_dom"/>
</dbReference>
<dbReference type="InterPro" id="IPR036640">
    <property type="entry name" value="ABC1_TM_sf"/>
</dbReference>
<dbReference type="InterPro" id="IPR003439">
    <property type="entry name" value="ABC_transporter-like_ATP-bd"/>
</dbReference>
<dbReference type="InterPro" id="IPR017871">
    <property type="entry name" value="ABC_transporter-like_CS"/>
</dbReference>
<dbReference type="InterPro" id="IPR050173">
    <property type="entry name" value="ABC_transporter_C-like"/>
</dbReference>
<dbReference type="InterPro" id="IPR009147">
    <property type="entry name" value="CFTR/ABCC7"/>
</dbReference>
<dbReference type="InterPro" id="IPR047082">
    <property type="entry name" value="CFTR1_ATP-bd_dom1"/>
</dbReference>
<dbReference type="InterPro" id="IPR025837">
    <property type="entry name" value="CFTR_reg_dom"/>
</dbReference>
<dbReference type="InterPro" id="IPR027417">
    <property type="entry name" value="P-loop_NTPase"/>
</dbReference>
<dbReference type="NCBIfam" id="TIGR01271">
    <property type="entry name" value="CFTR_protein"/>
    <property type="match status" value="1"/>
</dbReference>
<dbReference type="PANTHER" id="PTHR24223">
    <property type="entry name" value="ATP-BINDING CASSETTE SUB-FAMILY C"/>
    <property type="match status" value="1"/>
</dbReference>
<dbReference type="PANTHER" id="PTHR24223:SF19">
    <property type="entry name" value="CYSTIC FIBROSIS TRANSMEMBRANE CONDUCTANCE REGULATOR"/>
    <property type="match status" value="1"/>
</dbReference>
<dbReference type="Pfam" id="PF00664">
    <property type="entry name" value="ABC_membrane"/>
    <property type="match status" value="2"/>
</dbReference>
<dbReference type="Pfam" id="PF00005">
    <property type="entry name" value="ABC_tran"/>
    <property type="match status" value="2"/>
</dbReference>
<dbReference type="Pfam" id="PF14396">
    <property type="entry name" value="CFTR_R"/>
    <property type="match status" value="1"/>
</dbReference>
<dbReference type="PRINTS" id="PR01851">
    <property type="entry name" value="CYSFIBREGLTR"/>
</dbReference>
<dbReference type="SMART" id="SM00382">
    <property type="entry name" value="AAA"/>
    <property type="match status" value="2"/>
</dbReference>
<dbReference type="SUPFAM" id="SSF90123">
    <property type="entry name" value="ABC transporter transmembrane region"/>
    <property type="match status" value="2"/>
</dbReference>
<dbReference type="SUPFAM" id="SSF52540">
    <property type="entry name" value="P-loop containing nucleoside triphosphate hydrolases"/>
    <property type="match status" value="2"/>
</dbReference>
<dbReference type="PROSITE" id="PS50929">
    <property type="entry name" value="ABC_TM1F"/>
    <property type="match status" value="2"/>
</dbReference>
<dbReference type="PROSITE" id="PS00211">
    <property type="entry name" value="ABC_TRANSPORTER_1"/>
    <property type="match status" value="1"/>
</dbReference>
<dbReference type="PROSITE" id="PS50893">
    <property type="entry name" value="ABC_TRANSPORTER_2"/>
    <property type="match status" value="2"/>
</dbReference>